<sequence length="351" mass="40057">MPVLHNRVSNQELRARMLAESEPRTTVSFYRYFTLSDPQGFRDDLYRTLTALQVFGRVYIAAEGINAQISVLQSRFDAMREALYAAHPQLDGLRLNVALDDDGKSFWVLRMKVRPRIVADGIDDPTFNPANVGHYLKAEEVNALADDPQALFVDMRNHYEYEVGHFDQAIEIPSDTFREQLPMVVEMLQHDKDKKIVMYCTGGIRCEKASAWMRHNGFKNVYHVEGGIIEYARRAREQGLPLKFTGKNFVFDERLGERITPDIIAHCHQCGAPCDSHTNCRNQGCHLLFIQCPVCAEHYVGCCSVTCQEELSLPLSEQRSHRAGRENGMKIFNKSRERLQLSLTGEDSAQK</sequence>
<feature type="chain" id="PRO_0000242944" description="tRNA uridine(34) hydroxylase">
    <location>
        <begin position="1"/>
        <end position="351"/>
    </location>
</feature>
<feature type="domain" description="Rhodanese" evidence="1">
    <location>
        <begin position="146"/>
        <end position="240"/>
    </location>
</feature>
<feature type="active site" description="Cysteine persulfide intermediate" evidence="1">
    <location>
        <position position="200"/>
    </location>
</feature>
<dbReference type="EC" id="1.14.-.-" evidence="1"/>
<dbReference type="EMBL" id="AP008232">
    <property type="protein sequence ID" value="BAE74323.1"/>
    <property type="molecule type" value="Genomic_DNA"/>
</dbReference>
<dbReference type="RefSeq" id="WP_011410908.1">
    <property type="nucleotide sequence ID" value="NC_007712.1"/>
</dbReference>
<dbReference type="SMR" id="Q2NU52"/>
<dbReference type="KEGG" id="sgl:SG1048"/>
<dbReference type="eggNOG" id="COG1054">
    <property type="taxonomic scope" value="Bacteria"/>
</dbReference>
<dbReference type="HOGENOM" id="CLU_038878_1_1_6"/>
<dbReference type="OrthoDB" id="9778326at2"/>
<dbReference type="Proteomes" id="UP000001932">
    <property type="component" value="Chromosome"/>
</dbReference>
<dbReference type="GO" id="GO:0016705">
    <property type="term" value="F:oxidoreductase activity, acting on paired donors, with incorporation or reduction of molecular oxygen"/>
    <property type="evidence" value="ECO:0007669"/>
    <property type="project" value="UniProtKB-UniRule"/>
</dbReference>
<dbReference type="GO" id="GO:0006400">
    <property type="term" value="P:tRNA modification"/>
    <property type="evidence" value="ECO:0007669"/>
    <property type="project" value="UniProtKB-UniRule"/>
</dbReference>
<dbReference type="CDD" id="cd01518">
    <property type="entry name" value="RHOD_YceA"/>
    <property type="match status" value="1"/>
</dbReference>
<dbReference type="Gene3D" id="3.30.70.100">
    <property type="match status" value="1"/>
</dbReference>
<dbReference type="Gene3D" id="3.40.250.10">
    <property type="entry name" value="Rhodanese-like domain"/>
    <property type="match status" value="1"/>
</dbReference>
<dbReference type="HAMAP" id="MF_00469">
    <property type="entry name" value="TrhO"/>
    <property type="match status" value="1"/>
</dbReference>
<dbReference type="InterPro" id="IPR001763">
    <property type="entry name" value="Rhodanese-like_dom"/>
</dbReference>
<dbReference type="InterPro" id="IPR036873">
    <property type="entry name" value="Rhodanese-like_dom_sf"/>
</dbReference>
<dbReference type="InterPro" id="IPR022111">
    <property type="entry name" value="Rhodanese_C"/>
</dbReference>
<dbReference type="InterPro" id="IPR020936">
    <property type="entry name" value="TrhO"/>
</dbReference>
<dbReference type="InterPro" id="IPR040503">
    <property type="entry name" value="TRHO_N"/>
</dbReference>
<dbReference type="NCBIfam" id="NF001133">
    <property type="entry name" value="PRK00142.1-1"/>
    <property type="match status" value="1"/>
</dbReference>
<dbReference type="PANTHER" id="PTHR43846:SF1">
    <property type="entry name" value="TRNA URIDINE(34) HYDROXYLASE"/>
    <property type="match status" value="1"/>
</dbReference>
<dbReference type="PANTHER" id="PTHR43846">
    <property type="entry name" value="UPF0176 PROTEIN YCEA"/>
    <property type="match status" value="1"/>
</dbReference>
<dbReference type="Pfam" id="PF00581">
    <property type="entry name" value="Rhodanese"/>
    <property type="match status" value="1"/>
</dbReference>
<dbReference type="Pfam" id="PF12368">
    <property type="entry name" value="Rhodanese_C"/>
    <property type="match status" value="1"/>
</dbReference>
<dbReference type="Pfam" id="PF17773">
    <property type="entry name" value="UPF0176_N"/>
    <property type="match status" value="1"/>
</dbReference>
<dbReference type="SMART" id="SM00450">
    <property type="entry name" value="RHOD"/>
    <property type="match status" value="1"/>
</dbReference>
<dbReference type="SUPFAM" id="SSF52821">
    <property type="entry name" value="Rhodanese/Cell cycle control phosphatase"/>
    <property type="match status" value="1"/>
</dbReference>
<dbReference type="PROSITE" id="PS50206">
    <property type="entry name" value="RHODANESE_3"/>
    <property type="match status" value="1"/>
</dbReference>
<gene>
    <name evidence="1" type="primary">trhO</name>
    <name type="ordered locus">SG1048</name>
</gene>
<proteinExistence type="inferred from homology"/>
<accession>Q2NU52</accession>
<keyword id="KW-0560">Oxidoreductase</keyword>
<keyword id="KW-0819">tRNA processing</keyword>
<reference key="1">
    <citation type="journal article" date="2006" name="Genome Res.">
        <title>Massive genome erosion and functional adaptations provide insights into the symbiotic lifestyle of Sodalis glossinidius in the tsetse host.</title>
        <authorList>
            <person name="Toh H."/>
            <person name="Weiss B.L."/>
            <person name="Perkin S.A.H."/>
            <person name="Yamashita A."/>
            <person name="Oshima K."/>
            <person name="Hattori M."/>
            <person name="Aksoy S."/>
        </authorList>
    </citation>
    <scope>NUCLEOTIDE SEQUENCE [LARGE SCALE GENOMIC DNA]</scope>
    <source>
        <strain>morsitans</strain>
    </source>
</reference>
<name>TRHO_SODGM</name>
<organism>
    <name type="scientific">Sodalis glossinidius (strain morsitans)</name>
    <dbReference type="NCBI Taxonomy" id="343509"/>
    <lineage>
        <taxon>Bacteria</taxon>
        <taxon>Pseudomonadati</taxon>
        <taxon>Pseudomonadota</taxon>
        <taxon>Gammaproteobacteria</taxon>
        <taxon>Enterobacterales</taxon>
        <taxon>Bruguierivoracaceae</taxon>
        <taxon>Sodalis</taxon>
    </lineage>
</organism>
<protein>
    <recommendedName>
        <fullName evidence="1">tRNA uridine(34) hydroxylase</fullName>
        <ecNumber evidence="1">1.14.-.-</ecNumber>
    </recommendedName>
    <alternativeName>
        <fullName evidence="1">tRNA hydroxylation protein O</fullName>
    </alternativeName>
</protein>
<comment type="function">
    <text evidence="1">Catalyzes oxygen-dependent 5-hydroxyuridine (ho5U) modification at position 34 in tRNAs.</text>
</comment>
<comment type="catalytic activity">
    <reaction evidence="1">
        <text>uridine(34) in tRNA + AH2 + O2 = 5-hydroxyuridine(34) in tRNA + A + H2O</text>
        <dbReference type="Rhea" id="RHEA:64224"/>
        <dbReference type="Rhea" id="RHEA-COMP:11727"/>
        <dbReference type="Rhea" id="RHEA-COMP:13381"/>
        <dbReference type="ChEBI" id="CHEBI:13193"/>
        <dbReference type="ChEBI" id="CHEBI:15377"/>
        <dbReference type="ChEBI" id="CHEBI:15379"/>
        <dbReference type="ChEBI" id="CHEBI:17499"/>
        <dbReference type="ChEBI" id="CHEBI:65315"/>
        <dbReference type="ChEBI" id="CHEBI:136877"/>
    </reaction>
</comment>
<comment type="similarity">
    <text evidence="1">Belongs to the TrhO family.</text>
</comment>
<evidence type="ECO:0000255" key="1">
    <source>
        <dbReference type="HAMAP-Rule" id="MF_00469"/>
    </source>
</evidence>